<comment type="function">
    <text evidence="1">Receptor for neuropeptide Y and peptide YY. The activity of this receptor is mediated by G proteins that inhibit adenylate cyclase activity. Seems to be associated with food intake. Could be involved in feeding disorders (By similarity).</text>
</comment>
<comment type="subcellular location">
    <subcellularLocation>
        <location>Cell membrane</location>
        <topology>Multi-pass membrane protein</topology>
    </subcellularLocation>
</comment>
<comment type="similarity">
    <text evidence="3">Belongs to the G-protein coupled receptor 1 family.</text>
</comment>
<dbReference type="EMBL" id="AF049329">
    <property type="protein sequence ID" value="AAC17839.1"/>
    <property type="molecule type" value="mRNA"/>
</dbReference>
<dbReference type="EMBL" id="AF022948">
    <property type="protein sequence ID" value="AAB81829.1"/>
    <property type="molecule type" value="Genomic_DNA"/>
</dbReference>
<dbReference type="EMBL" id="AB001346">
    <property type="protein sequence ID" value="BAA89538.1"/>
    <property type="molecule type" value="mRNA"/>
</dbReference>
<dbReference type="CCDS" id="CCDS22335.1"/>
<dbReference type="RefSeq" id="NP_001345886.1">
    <property type="nucleotide sequence ID" value="NM_001358957.1"/>
</dbReference>
<dbReference type="RefSeq" id="NP_001345887.1">
    <property type="nucleotide sequence ID" value="NM_001358958.1"/>
</dbReference>
<dbReference type="RefSeq" id="NP_057917.2">
    <property type="nucleotide sequence ID" value="NM_016708.3"/>
</dbReference>
<dbReference type="RefSeq" id="XP_006509661.1">
    <property type="nucleotide sequence ID" value="XM_006509598.3"/>
</dbReference>
<dbReference type="RefSeq" id="XP_006509662.1">
    <property type="nucleotide sequence ID" value="XM_006509599.3"/>
</dbReference>
<dbReference type="RefSeq" id="XP_036009706.1">
    <property type="nucleotide sequence ID" value="XM_036153813.1"/>
</dbReference>
<dbReference type="SMR" id="O70342"/>
<dbReference type="CORUM" id="O70342"/>
<dbReference type="FunCoup" id="O70342">
    <property type="interactions" value="512"/>
</dbReference>
<dbReference type="STRING" id="10090.ENSMUSP00000065157"/>
<dbReference type="BindingDB" id="O70342"/>
<dbReference type="ChEMBL" id="CHEMBL3802"/>
<dbReference type="GlyCosmos" id="O70342">
    <property type="glycosylation" value="4 sites, No reported glycans"/>
</dbReference>
<dbReference type="GlyGen" id="O70342">
    <property type="glycosylation" value="4 sites"/>
</dbReference>
<dbReference type="PhosphoSitePlus" id="O70342"/>
<dbReference type="SwissPalm" id="O70342"/>
<dbReference type="PaxDb" id="10090-ENSMUSP00000065157"/>
<dbReference type="ProteomicsDB" id="253006"/>
<dbReference type="Antibodypedia" id="2946">
    <property type="antibodies" value="278 antibodies from 34 providers"/>
</dbReference>
<dbReference type="DNASU" id="18168"/>
<dbReference type="Ensembl" id="ENSMUST00000070810.8">
    <property type="protein sequence ID" value="ENSMUSP00000065157.8"/>
    <property type="gene ID" value="ENSMUSG00000044014.10"/>
</dbReference>
<dbReference type="Ensembl" id="ENSMUST00000211920.2">
    <property type="protein sequence ID" value="ENSMUSP00000148410.2"/>
    <property type="gene ID" value="ENSMUSG00000044014.10"/>
</dbReference>
<dbReference type="Ensembl" id="ENSMUST00000212563.2">
    <property type="protein sequence ID" value="ENSMUSP00000148589.2"/>
    <property type="gene ID" value="ENSMUSG00000044014.10"/>
</dbReference>
<dbReference type="GeneID" id="18168"/>
<dbReference type="KEGG" id="mmu:18168"/>
<dbReference type="UCSC" id="uc009lvr.2">
    <property type="organism name" value="mouse"/>
</dbReference>
<dbReference type="AGR" id="MGI:108082"/>
<dbReference type="CTD" id="4889"/>
<dbReference type="MGI" id="MGI:108082">
    <property type="gene designation" value="Npy5r"/>
</dbReference>
<dbReference type="VEuPathDB" id="HostDB:ENSMUSG00000044014"/>
<dbReference type="eggNOG" id="KOG3656">
    <property type="taxonomic scope" value="Eukaryota"/>
</dbReference>
<dbReference type="GeneTree" id="ENSGT00940000161766"/>
<dbReference type="HOGENOM" id="CLU_009579_6_1_1"/>
<dbReference type="InParanoid" id="O70342"/>
<dbReference type="OMA" id="RHHQDTH"/>
<dbReference type="OrthoDB" id="5981855at2759"/>
<dbReference type="PhylomeDB" id="O70342"/>
<dbReference type="TreeFam" id="TF315303"/>
<dbReference type="Reactome" id="R-MMU-375276">
    <property type="pathway name" value="Peptide ligand-binding receptors"/>
</dbReference>
<dbReference type="Reactome" id="R-MMU-418594">
    <property type="pathway name" value="G alpha (i) signalling events"/>
</dbReference>
<dbReference type="BioGRID-ORCS" id="18168">
    <property type="hits" value="3 hits in 76 CRISPR screens"/>
</dbReference>
<dbReference type="PRO" id="PR:O70342"/>
<dbReference type="Proteomes" id="UP000000589">
    <property type="component" value="Chromosome 8"/>
</dbReference>
<dbReference type="RNAct" id="O70342">
    <property type="molecule type" value="protein"/>
</dbReference>
<dbReference type="Bgee" id="ENSMUSG00000044014">
    <property type="expression patterns" value="Expressed in lumbar subsegment of spinal cord and 64 other cell types or tissues"/>
</dbReference>
<dbReference type="ExpressionAtlas" id="O70342">
    <property type="expression patterns" value="baseline and differential"/>
</dbReference>
<dbReference type="GO" id="GO:0098982">
    <property type="term" value="C:GABA-ergic synapse"/>
    <property type="evidence" value="ECO:0000314"/>
    <property type="project" value="SynGO"/>
</dbReference>
<dbReference type="GO" id="GO:0016020">
    <property type="term" value="C:membrane"/>
    <property type="evidence" value="ECO:0000314"/>
    <property type="project" value="MGI"/>
</dbReference>
<dbReference type="GO" id="GO:0043005">
    <property type="term" value="C:neuron projection"/>
    <property type="evidence" value="ECO:0000314"/>
    <property type="project" value="MGI"/>
</dbReference>
<dbReference type="GO" id="GO:0005886">
    <property type="term" value="C:plasma membrane"/>
    <property type="evidence" value="ECO:0007669"/>
    <property type="project" value="UniProtKB-SubCell"/>
</dbReference>
<dbReference type="GO" id="GO:0098793">
    <property type="term" value="C:presynapse"/>
    <property type="evidence" value="ECO:0000314"/>
    <property type="project" value="SynGO"/>
</dbReference>
<dbReference type="GO" id="GO:0004983">
    <property type="term" value="F:neuropeptide Y receptor activity"/>
    <property type="evidence" value="ECO:0000314"/>
    <property type="project" value="MGI"/>
</dbReference>
<dbReference type="GO" id="GO:0001602">
    <property type="term" value="F:pancreatic polypeptide receptor activity"/>
    <property type="evidence" value="ECO:0000314"/>
    <property type="project" value="MGI"/>
</dbReference>
<dbReference type="GO" id="GO:0001601">
    <property type="term" value="F:peptide YY receptor activity"/>
    <property type="evidence" value="ECO:0000314"/>
    <property type="project" value="MGI"/>
</dbReference>
<dbReference type="GO" id="GO:0003214">
    <property type="term" value="P:cardiac left ventricle morphogenesis"/>
    <property type="evidence" value="ECO:0007669"/>
    <property type="project" value="Ensembl"/>
</dbReference>
<dbReference type="GO" id="GO:0007268">
    <property type="term" value="P:chemical synaptic transmission"/>
    <property type="evidence" value="ECO:0000315"/>
    <property type="project" value="MGI"/>
</dbReference>
<dbReference type="GO" id="GO:0042755">
    <property type="term" value="P:eating behavior"/>
    <property type="evidence" value="ECO:0007669"/>
    <property type="project" value="Ensembl"/>
</dbReference>
<dbReference type="GO" id="GO:0060112">
    <property type="term" value="P:generation of ovulation cycle rhythm"/>
    <property type="evidence" value="ECO:0007669"/>
    <property type="project" value="Ensembl"/>
</dbReference>
<dbReference type="GO" id="GO:0002865">
    <property type="term" value="P:negative regulation of acute inflammatory response to antigenic stimulus"/>
    <property type="evidence" value="ECO:0007669"/>
    <property type="project" value="Ensembl"/>
</dbReference>
<dbReference type="GO" id="GO:0043066">
    <property type="term" value="P:negative regulation of apoptotic process"/>
    <property type="evidence" value="ECO:0007669"/>
    <property type="project" value="Ensembl"/>
</dbReference>
<dbReference type="GO" id="GO:0014050">
    <property type="term" value="P:negative regulation of glutamate secretion"/>
    <property type="evidence" value="ECO:0007669"/>
    <property type="project" value="Ensembl"/>
</dbReference>
<dbReference type="GO" id="GO:0032229">
    <property type="term" value="P:negative regulation of synaptic transmission, GABAergic"/>
    <property type="evidence" value="ECO:0007669"/>
    <property type="project" value="Ensembl"/>
</dbReference>
<dbReference type="GO" id="GO:0003151">
    <property type="term" value="P:outflow tract morphogenesis"/>
    <property type="evidence" value="ECO:0007669"/>
    <property type="project" value="Ensembl"/>
</dbReference>
<dbReference type="GO" id="GO:0002675">
    <property type="term" value="P:positive regulation of acute inflammatory response"/>
    <property type="evidence" value="ECO:0007669"/>
    <property type="project" value="Ensembl"/>
</dbReference>
<dbReference type="GO" id="GO:0070374">
    <property type="term" value="P:positive regulation of ERK1 and ERK2 cascade"/>
    <property type="evidence" value="ECO:0007669"/>
    <property type="project" value="Ensembl"/>
</dbReference>
<dbReference type="GO" id="GO:0048661">
    <property type="term" value="P:positive regulation of smooth muscle cell proliferation"/>
    <property type="evidence" value="ECO:0007669"/>
    <property type="project" value="Ensembl"/>
</dbReference>
<dbReference type="GO" id="GO:0099538">
    <property type="term" value="P:synaptic signaling via neuropeptide"/>
    <property type="evidence" value="ECO:0000314"/>
    <property type="project" value="SynGO"/>
</dbReference>
<dbReference type="CDD" id="cd15398">
    <property type="entry name" value="7tmA_NPY5R"/>
    <property type="match status" value="1"/>
</dbReference>
<dbReference type="Gene3D" id="1.20.1070.10">
    <property type="entry name" value="Rhodopsin 7-helix transmembrane proteins"/>
    <property type="match status" value="1"/>
</dbReference>
<dbReference type="InterPro" id="IPR000276">
    <property type="entry name" value="GPCR_Rhodpsn"/>
</dbReference>
<dbReference type="InterPro" id="IPR017452">
    <property type="entry name" value="GPCR_Rhodpsn_7TM"/>
</dbReference>
<dbReference type="InterPro" id="IPR000393">
    <property type="entry name" value="NPY5_rcpt"/>
</dbReference>
<dbReference type="InterPro" id="IPR000611">
    <property type="entry name" value="NPY_rcpt"/>
</dbReference>
<dbReference type="PANTHER" id="PTHR24235">
    <property type="entry name" value="NEUROPEPTIDE Y RECEPTOR"/>
    <property type="match status" value="1"/>
</dbReference>
<dbReference type="PANTHER" id="PTHR24235:SF10">
    <property type="entry name" value="NEUROPEPTIDE Y RECEPTOR TYPE 5"/>
    <property type="match status" value="1"/>
</dbReference>
<dbReference type="Pfam" id="PF00001">
    <property type="entry name" value="7tm_1"/>
    <property type="match status" value="1"/>
</dbReference>
<dbReference type="PRINTS" id="PR00237">
    <property type="entry name" value="GPCRRHODOPSN"/>
</dbReference>
<dbReference type="PRINTS" id="PR01016">
    <property type="entry name" value="NRPEPTIDEY5R"/>
</dbReference>
<dbReference type="PRINTS" id="PR01012">
    <property type="entry name" value="NRPEPTIDEYR"/>
</dbReference>
<dbReference type="SMART" id="SM01381">
    <property type="entry name" value="7TM_GPCR_Srsx"/>
    <property type="match status" value="1"/>
</dbReference>
<dbReference type="SUPFAM" id="SSF81321">
    <property type="entry name" value="Family A G protein-coupled receptor-like"/>
    <property type="match status" value="1"/>
</dbReference>
<dbReference type="PROSITE" id="PS50262">
    <property type="entry name" value="G_PROTEIN_RECEP_F1_2"/>
    <property type="match status" value="1"/>
</dbReference>
<feature type="chain" id="PRO_0000069940" description="Neuropeptide Y receptor type 5">
    <location>
        <begin position="1"/>
        <end position="466"/>
    </location>
</feature>
<feature type="topological domain" description="Extracellular" evidence="2">
    <location>
        <begin position="1"/>
        <end position="63"/>
    </location>
</feature>
<feature type="transmembrane region" description="Helical; Name=1" evidence="2">
    <location>
        <begin position="64"/>
        <end position="84"/>
    </location>
</feature>
<feature type="topological domain" description="Cytoplasmic" evidence="2">
    <location>
        <begin position="85"/>
        <end position="98"/>
    </location>
</feature>
<feature type="transmembrane region" description="Helical; Name=2" evidence="2">
    <location>
        <begin position="99"/>
        <end position="119"/>
    </location>
</feature>
<feature type="topological domain" description="Extracellular" evidence="2">
    <location>
        <begin position="120"/>
        <end position="138"/>
    </location>
</feature>
<feature type="transmembrane region" description="Helical; Name=3" evidence="2">
    <location>
        <begin position="139"/>
        <end position="159"/>
    </location>
</feature>
<feature type="topological domain" description="Cytoplasmic" evidence="2">
    <location>
        <begin position="160"/>
        <end position="177"/>
    </location>
</feature>
<feature type="transmembrane region" description="Helical; Name=4" evidence="2">
    <location>
        <begin position="178"/>
        <end position="198"/>
    </location>
</feature>
<feature type="topological domain" description="Extracellular" evidence="2">
    <location>
        <begin position="199"/>
        <end position="229"/>
    </location>
</feature>
<feature type="transmembrane region" description="Helical; Name=5" evidence="2">
    <location>
        <begin position="230"/>
        <end position="250"/>
    </location>
</feature>
<feature type="topological domain" description="Cytoplasmic" evidence="2">
    <location>
        <begin position="251"/>
        <end position="389"/>
    </location>
</feature>
<feature type="transmembrane region" description="Helical; Name=6" evidence="2">
    <location>
        <begin position="390"/>
        <end position="410"/>
    </location>
</feature>
<feature type="topological domain" description="Extracellular" evidence="2">
    <location>
        <begin position="411"/>
        <end position="427"/>
    </location>
</feature>
<feature type="transmembrane region" description="Helical; Name=7" evidence="2">
    <location>
        <begin position="428"/>
        <end position="448"/>
    </location>
</feature>
<feature type="topological domain" description="Cytoplasmic" evidence="2">
    <location>
        <begin position="449"/>
        <end position="466"/>
    </location>
</feature>
<feature type="region of interest" description="Disordered" evidence="4">
    <location>
        <begin position="323"/>
        <end position="346"/>
    </location>
</feature>
<feature type="lipid moiety-binding region" description="S-palmitoyl cysteine" evidence="2">
    <location>
        <position position="462"/>
    </location>
</feature>
<feature type="glycosylation site" description="N-linked (GlcNAc...) asparagine" evidence="2">
    <location>
        <position position="10"/>
    </location>
</feature>
<feature type="glycosylation site" description="N-linked (GlcNAc...) asparagine" evidence="2">
    <location>
        <position position="17"/>
    </location>
</feature>
<feature type="glycosylation site" description="N-linked (GlcNAc...) asparagine" evidence="2">
    <location>
        <position position="38"/>
    </location>
</feature>
<feature type="glycosylation site" description="N-linked (GlcNAc...) asparagine" evidence="2">
    <location>
        <position position="39"/>
    </location>
</feature>
<feature type="disulfide bond" evidence="3">
    <location>
        <begin position="135"/>
        <end position="219"/>
    </location>
</feature>
<feature type="sequence conflict" description="In Ref. 1; AAC17839." evidence="5" ref="1">
    <original>L</original>
    <variation>F</variation>
    <location>
        <position position="195"/>
    </location>
</feature>
<feature type="sequence conflict" description="In Ref. 3; BAA89538." evidence="5" ref="3">
    <original>K</original>
    <variation>Q</variation>
    <location>
        <position position="284"/>
    </location>
</feature>
<keyword id="KW-1003">Cell membrane</keyword>
<keyword id="KW-1015">Disulfide bond</keyword>
<keyword id="KW-0297">G-protein coupled receptor</keyword>
<keyword id="KW-0325">Glycoprotein</keyword>
<keyword id="KW-0449">Lipoprotein</keyword>
<keyword id="KW-0472">Membrane</keyword>
<keyword id="KW-0564">Palmitate</keyword>
<keyword id="KW-0675">Receptor</keyword>
<keyword id="KW-1185">Reference proteome</keyword>
<keyword id="KW-0807">Transducer</keyword>
<keyword id="KW-0812">Transmembrane</keyword>
<keyword id="KW-1133">Transmembrane helix</keyword>
<evidence type="ECO:0000250" key="1"/>
<evidence type="ECO:0000255" key="2"/>
<evidence type="ECO:0000255" key="3">
    <source>
        <dbReference type="PROSITE-ProRule" id="PRU00521"/>
    </source>
</evidence>
<evidence type="ECO:0000256" key="4">
    <source>
        <dbReference type="SAM" id="MobiDB-lite"/>
    </source>
</evidence>
<evidence type="ECO:0000305" key="5"/>
<name>NPY5R_MOUSE</name>
<protein>
    <recommendedName>
        <fullName>Neuropeptide Y receptor type 5</fullName>
        <shortName>NPY5-R</shortName>
    </recommendedName>
    <alternativeName>
        <fullName>NPY-Y5 receptor</fullName>
        <shortName>NPYY5-R</shortName>
        <shortName>Y5 receptor</shortName>
    </alternativeName>
</protein>
<sequence length="466" mass="52785">MEVKLEEHFNKTFVTENNTAASQNTASPAWEDYRGTENNTSAARNTAFPVWEDYRGSVDDLQYFLIGLYTFVSLLGFMGNLLILMAVMKKRNQKTTVNFLIGNLAFSDILVVLFCSPFTLTSVLLDQWMFGKAMCHIMPFLQCVSVLVSTLILISIAIVRYHMIKHPISNNLTANHGYFLIATVWTLGFAICSPLPVFHSLVELKETFGSALLSSKYLCVESWPSDSYRIAFTISLLLVQYILPLVCLTVSHTSVCRSISCGLSHKENRLEENEMINLTLHPSKKSRDQAKPPSTQKWSYSFIRKHRRRYSKKTACVLPAPAGPSQEKHLTVPENPGSVRSQLSPSSKVIPGVPICFEVKPEESSDAQEMRVKRSLTRIKKRSRSVFYRLTILILVFAVSWMPLHVFHVVTDFNDNLISNRHFKLVYCICHLLGMMSCCLNPILYGFLNNGIKADLRALIHCLHMS</sequence>
<accession>O70342</accession>
<accession>O35380</accession>
<accession>Q9JMK1</accession>
<gene>
    <name type="primary">Npy5r</name>
    <name type="synonym">Npy5</name>
</gene>
<proteinExistence type="evidence at transcript level"/>
<organism>
    <name type="scientific">Mus musculus</name>
    <name type="common">Mouse</name>
    <dbReference type="NCBI Taxonomy" id="10090"/>
    <lineage>
        <taxon>Eukaryota</taxon>
        <taxon>Metazoa</taxon>
        <taxon>Chordata</taxon>
        <taxon>Craniata</taxon>
        <taxon>Vertebrata</taxon>
        <taxon>Euteleostomi</taxon>
        <taxon>Mammalia</taxon>
        <taxon>Eutheria</taxon>
        <taxon>Euarchontoglires</taxon>
        <taxon>Glires</taxon>
        <taxon>Rodentia</taxon>
        <taxon>Myomorpha</taxon>
        <taxon>Muroidea</taxon>
        <taxon>Muridae</taxon>
        <taxon>Murinae</taxon>
        <taxon>Mus</taxon>
        <taxon>Mus</taxon>
    </lineage>
</organism>
<reference key="1">
    <citation type="journal article" date="1998" name="Regul. Pept.">
        <title>Molecular biology and pharmacology of multiple NPY Y5 receptor species homologs.</title>
        <authorList>
            <person name="Borowsky B."/>
            <person name="Walker M.W."/>
            <person name="Bard J."/>
            <person name="Weinshank R.L."/>
            <person name="Laz T.M."/>
            <person name="Vaysse P."/>
            <person name="Branchek T.A."/>
            <person name="Gerald C."/>
        </authorList>
    </citation>
    <scope>NUCLEOTIDE SEQUENCE [MRNA]</scope>
</reference>
<reference key="2">
    <citation type="submission" date="1997-09" db="EMBL/GenBank/DDBJ databases">
        <title>Mouse neuropeptide Y Y5 receptor characterized by repeat sequence in extracellular domain.</title>
        <authorList>
            <person name="Chen H."/>
            <person name="Adams S."/>
            <person name="McWhinnie E."/>
            <person name="Bayne M."/>
            <person name="Gadski R."/>
            <person name="Zastawny R."/>
        </authorList>
    </citation>
    <scope>NUCLEOTIDE SEQUENCE</scope>
    <source>
        <strain>129/Sv</strain>
        <tissue>Brain</tissue>
    </source>
</reference>
<reference key="3">
    <citation type="journal article" date="1997" name="Biochim. Biophys. Acta">
        <title>Molecular cloning, organization and localization of the gene for the mouse neuropeptide Y-Y5 receptor.</title>
        <authorList>
            <person name="Nakamura M."/>
            <person name="Yokoyama M."/>
            <person name="Watanabe H."/>
            <person name="Matsumoto T."/>
        </authorList>
    </citation>
    <scope>NUCLEOTIDE SEQUENCE [MRNA]</scope>
</reference>